<comment type="function">
    <text evidence="1">DNA-dependent RNA polymerase catalyzes the transcription of DNA into RNA using the four ribonucleoside triphosphates as substrates.</text>
</comment>
<comment type="catalytic activity">
    <reaction evidence="1">
        <text>RNA(n) + a ribonucleoside 5'-triphosphate = RNA(n+1) + diphosphate</text>
        <dbReference type="Rhea" id="RHEA:21248"/>
        <dbReference type="Rhea" id="RHEA-COMP:14527"/>
        <dbReference type="Rhea" id="RHEA-COMP:17342"/>
        <dbReference type="ChEBI" id="CHEBI:33019"/>
        <dbReference type="ChEBI" id="CHEBI:61557"/>
        <dbReference type="ChEBI" id="CHEBI:140395"/>
        <dbReference type="EC" id="2.7.7.6"/>
    </reaction>
</comment>
<comment type="subunit">
    <text evidence="1">Homodimer. The RNAP catalytic core consists of 2 alpha, 1 beta, 1 beta' and 1 omega subunit. When a sigma factor is associated with the core the holoenzyme is formed, which can initiate transcription.</text>
</comment>
<comment type="domain">
    <text evidence="1">The N-terminal domain is essential for RNAP assembly and basal transcription, whereas the C-terminal domain is involved in interaction with transcriptional regulators and with upstream promoter elements.</text>
</comment>
<comment type="similarity">
    <text evidence="1">Belongs to the RNA polymerase alpha chain family.</text>
</comment>
<feature type="chain" id="PRO_0000264556" description="DNA-directed RNA polymerase subunit alpha">
    <location>
        <begin position="1"/>
        <end position="312"/>
    </location>
</feature>
<feature type="region of interest" description="Alpha N-terminal domain (alpha-NTD)" evidence="1">
    <location>
        <begin position="1"/>
        <end position="226"/>
    </location>
</feature>
<feature type="region of interest" description="Alpha C-terminal domain (alpha-CTD)" evidence="1">
    <location>
        <begin position="242"/>
        <end position="312"/>
    </location>
</feature>
<organism>
    <name type="scientific">Streptococcus pyogenes serotype M4 (strain MGAS10750)</name>
    <dbReference type="NCBI Taxonomy" id="370554"/>
    <lineage>
        <taxon>Bacteria</taxon>
        <taxon>Bacillati</taxon>
        <taxon>Bacillota</taxon>
        <taxon>Bacilli</taxon>
        <taxon>Lactobacillales</taxon>
        <taxon>Streptococcaceae</taxon>
        <taxon>Streptococcus</taxon>
    </lineage>
</organism>
<reference key="1">
    <citation type="journal article" date="2006" name="Proc. Natl. Acad. Sci. U.S.A.">
        <title>Molecular genetic anatomy of inter- and intraserotype variation in the human bacterial pathogen group A Streptococcus.</title>
        <authorList>
            <person name="Beres S.B."/>
            <person name="Richter E.W."/>
            <person name="Nagiec M.J."/>
            <person name="Sumby P."/>
            <person name="Porcella S.F."/>
            <person name="DeLeo F.R."/>
            <person name="Musser J.M."/>
        </authorList>
    </citation>
    <scope>NUCLEOTIDE SEQUENCE [LARGE SCALE GENOMIC DNA]</scope>
    <source>
        <strain>MGAS10750</strain>
    </source>
</reference>
<evidence type="ECO:0000255" key="1">
    <source>
        <dbReference type="HAMAP-Rule" id="MF_00059"/>
    </source>
</evidence>
<sequence length="312" mass="34530">MIEFEKPIITKIDENKDYGRFVIEPLERGYGTTLGNSLRRVLLSSLPGAAVTSIKIDGVLHEFDTIPGVREDVMQIILNVKGLAVKSYVEDEKIIELEVEGPAEVTAGDILTDSDIELVNPDHYLFTIAEGHSLRATMTVAKKRGYVPAEGNKKDDAPVGTLAVDSIYTPVKKVNYQVEPARVGSNDGFDKLTIEIMTNGTIIPEDALGLSARVLIEHLNLFTDLTEVAKATEVMKETEKVNDEKVLDRTIEELDLSVRSYNCLKRAGINTVFDLTEKSEPEMMKVRNLGRKSLEEVKVKLADLGLGLKNDK</sequence>
<dbReference type="EC" id="2.7.7.6" evidence="1"/>
<dbReference type="EMBL" id="CP000262">
    <property type="protein sequence ID" value="ABF37024.1"/>
    <property type="molecule type" value="Genomic_DNA"/>
</dbReference>
<dbReference type="SMR" id="Q1J8Y7"/>
<dbReference type="KEGG" id="spi:MGAS10750_Spy0074"/>
<dbReference type="HOGENOM" id="CLU_053084_0_1_9"/>
<dbReference type="Proteomes" id="UP000002434">
    <property type="component" value="Chromosome"/>
</dbReference>
<dbReference type="GO" id="GO:0005737">
    <property type="term" value="C:cytoplasm"/>
    <property type="evidence" value="ECO:0007669"/>
    <property type="project" value="UniProtKB-ARBA"/>
</dbReference>
<dbReference type="GO" id="GO:0000428">
    <property type="term" value="C:DNA-directed RNA polymerase complex"/>
    <property type="evidence" value="ECO:0007669"/>
    <property type="project" value="UniProtKB-KW"/>
</dbReference>
<dbReference type="GO" id="GO:0003677">
    <property type="term" value="F:DNA binding"/>
    <property type="evidence" value="ECO:0007669"/>
    <property type="project" value="UniProtKB-UniRule"/>
</dbReference>
<dbReference type="GO" id="GO:0003899">
    <property type="term" value="F:DNA-directed RNA polymerase activity"/>
    <property type="evidence" value="ECO:0007669"/>
    <property type="project" value="UniProtKB-UniRule"/>
</dbReference>
<dbReference type="GO" id="GO:0046983">
    <property type="term" value="F:protein dimerization activity"/>
    <property type="evidence" value="ECO:0007669"/>
    <property type="project" value="InterPro"/>
</dbReference>
<dbReference type="GO" id="GO:0006351">
    <property type="term" value="P:DNA-templated transcription"/>
    <property type="evidence" value="ECO:0007669"/>
    <property type="project" value="UniProtKB-UniRule"/>
</dbReference>
<dbReference type="CDD" id="cd06928">
    <property type="entry name" value="RNAP_alpha_NTD"/>
    <property type="match status" value="1"/>
</dbReference>
<dbReference type="FunFam" id="1.10.150.20:FF:000001">
    <property type="entry name" value="DNA-directed RNA polymerase subunit alpha"/>
    <property type="match status" value="1"/>
</dbReference>
<dbReference type="FunFam" id="2.170.120.12:FF:000001">
    <property type="entry name" value="DNA-directed RNA polymerase subunit alpha"/>
    <property type="match status" value="1"/>
</dbReference>
<dbReference type="Gene3D" id="1.10.150.20">
    <property type="entry name" value="5' to 3' exonuclease, C-terminal subdomain"/>
    <property type="match status" value="1"/>
</dbReference>
<dbReference type="Gene3D" id="2.170.120.12">
    <property type="entry name" value="DNA-directed RNA polymerase, insert domain"/>
    <property type="match status" value="1"/>
</dbReference>
<dbReference type="Gene3D" id="3.30.1360.10">
    <property type="entry name" value="RNA polymerase, RBP11-like subunit"/>
    <property type="match status" value="1"/>
</dbReference>
<dbReference type="HAMAP" id="MF_00059">
    <property type="entry name" value="RNApol_bact_RpoA"/>
    <property type="match status" value="1"/>
</dbReference>
<dbReference type="InterPro" id="IPR011262">
    <property type="entry name" value="DNA-dir_RNA_pol_insert"/>
</dbReference>
<dbReference type="InterPro" id="IPR011263">
    <property type="entry name" value="DNA-dir_RNA_pol_RpoA/D/Rpb3"/>
</dbReference>
<dbReference type="InterPro" id="IPR011773">
    <property type="entry name" value="DNA-dir_RpoA"/>
</dbReference>
<dbReference type="InterPro" id="IPR036603">
    <property type="entry name" value="RBP11-like"/>
</dbReference>
<dbReference type="InterPro" id="IPR011260">
    <property type="entry name" value="RNAP_asu_C"/>
</dbReference>
<dbReference type="InterPro" id="IPR036643">
    <property type="entry name" value="RNApol_insert_sf"/>
</dbReference>
<dbReference type="NCBIfam" id="NF003513">
    <property type="entry name" value="PRK05182.1-2"/>
    <property type="match status" value="1"/>
</dbReference>
<dbReference type="NCBIfam" id="NF003515">
    <property type="entry name" value="PRK05182.2-1"/>
    <property type="match status" value="1"/>
</dbReference>
<dbReference type="NCBIfam" id="NF003518">
    <property type="entry name" value="PRK05182.2-4"/>
    <property type="match status" value="1"/>
</dbReference>
<dbReference type="NCBIfam" id="NF003519">
    <property type="entry name" value="PRK05182.2-5"/>
    <property type="match status" value="1"/>
</dbReference>
<dbReference type="NCBIfam" id="TIGR02027">
    <property type="entry name" value="rpoA"/>
    <property type="match status" value="1"/>
</dbReference>
<dbReference type="Pfam" id="PF01000">
    <property type="entry name" value="RNA_pol_A_bac"/>
    <property type="match status" value="1"/>
</dbReference>
<dbReference type="Pfam" id="PF03118">
    <property type="entry name" value="RNA_pol_A_CTD"/>
    <property type="match status" value="1"/>
</dbReference>
<dbReference type="Pfam" id="PF01193">
    <property type="entry name" value="RNA_pol_L"/>
    <property type="match status" value="1"/>
</dbReference>
<dbReference type="SMART" id="SM00662">
    <property type="entry name" value="RPOLD"/>
    <property type="match status" value="1"/>
</dbReference>
<dbReference type="SUPFAM" id="SSF47789">
    <property type="entry name" value="C-terminal domain of RNA polymerase alpha subunit"/>
    <property type="match status" value="1"/>
</dbReference>
<dbReference type="SUPFAM" id="SSF56553">
    <property type="entry name" value="Insert subdomain of RNA polymerase alpha subunit"/>
    <property type="match status" value="1"/>
</dbReference>
<dbReference type="SUPFAM" id="SSF55257">
    <property type="entry name" value="RBP11-like subunits of RNA polymerase"/>
    <property type="match status" value="1"/>
</dbReference>
<proteinExistence type="inferred from homology"/>
<name>RPOA_STRPF</name>
<accession>Q1J8Y7</accession>
<keyword id="KW-0240">DNA-directed RNA polymerase</keyword>
<keyword id="KW-0548">Nucleotidyltransferase</keyword>
<keyword id="KW-0804">Transcription</keyword>
<keyword id="KW-0808">Transferase</keyword>
<gene>
    <name evidence="1" type="primary">rpoA</name>
    <name type="ordered locus">MGAS10750_Spy0074</name>
</gene>
<protein>
    <recommendedName>
        <fullName evidence="1">DNA-directed RNA polymerase subunit alpha</fullName>
        <shortName evidence="1">RNAP subunit alpha</shortName>
        <ecNumber evidence="1">2.7.7.6</ecNumber>
    </recommendedName>
    <alternativeName>
        <fullName evidence="1">RNA polymerase subunit alpha</fullName>
    </alternativeName>
    <alternativeName>
        <fullName evidence="1">Transcriptase subunit alpha</fullName>
    </alternativeName>
</protein>